<sequence length="96" mass="10551">MLKFDIQHFAHKKGGGSTSNGRDSESKRLGAKRADGQFVTGGSILYRQRGTKIYPGTNVGRGGDDTLFAKTDGVVRFERMGRDKKKVSVYPEVQEA</sequence>
<dbReference type="EMBL" id="AE017262">
    <property type="protein sequence ID" value="AAT04334.1"/>
    <property type="molecule type" value="Genomic_DNA"/>
</dbReference>
<dbReference type="RefSeq" id="WP_003726866.1">
    <property type="nucleotide sequence ID" value="NC_002973.6"/>
</dbReference>
<dbReference type="SMR" id="Q71ZD0"/>
<dbReference type="GeneID" id="93239419"/>
<dbReference type="KEGG" id="lmf:LMOf2365_1559"/>
<dbReference type="HOGENOM" id="CLU_095424_4_0_9"/>
<dbReference type="GO" id="GO:0022625">
    <property type="term" value="C:cytosolic large ribosomal subunit"/>
    <property type="evidence" value="ECO:0007669"/>
    <property type="project" value="TreeGrafter"/>
</dbReference>
<dbReference type="GO" id="GO:0003735">
    <property type="term" value="F:structural constituent of ribosome"/>
    <property type="evidence" value="ECO:0007669"/>
    <property type="project" value="InterPro"/>
</dbReference>
<dbReference type="GO" id="GO:0006412">
    <property type="term" value="P:translation"/>
    <property type="evidence" value="ECO:0007669"/>
    <property type="project" value="UniProtKB-UniRule"/>
</dbReference>
<dbReference type="FunFam" id="2.40.50.100:FF:000004">
    <property type="entry name" value="50S ribosomal protein L27"/>
    <property type="match status" value="1"/>
</dbReference>
<dbReference type="Gene3D" id="2.40.50.100">
    <property type="match status" value="1"/>
</dbReference>
<dbReference type="HAMAP" id="MF_00539">
    <property type="entry name" value="Ribosomal_bL27"/>
    <property type="match status" value="1"/>
</dbReference>
<dbReference type="InterPro" id="IPR001684">
    <property type="entry name" value="Ribosomal_bL27"/>
</dbReference>
<dbReference type="InterPro" id="IPR018261">
    <property type="entry name" value="Ribosomal_bL27_CS"/>
</dbReference>
<dbReference type="NCBIfam" id="TIGR00062">
    <property type="entry name" value="L27"/>
    <property type="match status" value="1"/>
</dbReference>
<dbReference type="PANTHER" id="PTHR15893:SF0">
    <property type="entry name" value="LARGE RIBOSOMAL SUBUNIT PROTEIN BL27M"/>
    <property type="match status" value="1"/>
</dbReference>
<dbReference type="PANTHER" id="PTHR15893">
    <property type="entry name" value="RIBOSOMAL PROTEIN L27"/>
    <property type="match status" value="1"/>
</dbReference>
<dbReference type="Pfam" id="PF01016">
    <property type="entry name" value="Ribosomal_L27"/>
    <property type="match status" value="1"/>
</dbReference>
<dbReference type="PRINTS" id="PR00063">
    <property type="entry name" value="RIBOSOMALL27"/>
</dbReference>
<dbReference type="SUPFAM" id="SSF110324">
    <property type="entry name" value="Ribosomal L27 protein-like"/>
    <property type="match status" value="1"/>
</dbReference>
<dbReference type="PROSITE" id="PS00831">
    <property type="entry name" value="RIBOSOMAL_L27"/>
    <property type="match status" value="1"/>
</dbReference>
<feature type="propeptide" id="PRO_0000459912" evidence="1">
    <location>
        <begin position="1"/>
        <end position="9"/>
    </location>
</feature>
<feature type="chain" id="PRO_0000181114" description="Large ribosomal subunit protein bL27">
    <location>
        <begin position="10"/>
        <end position="96"/>
    </location>
</feature>
<feature type="region of interest" description="Disordered" evidence="3">
    <location>
        <begin position="1"/>
        <end position="33"/>
    </location>
</feature>
<feature type="compositionally biased region" description="Basic and acidic residues" evidence="3">
    <location>
        <begin position="22"/>
        <end position="33"/>
    </location>
</feature>
<keyword id="KW-0687">Ribonucleoprotein</keyword>
<keyword id="KW-0689">Ribosomal protein</keyword>
<accession>Q71ZD0</accession>
<gene>
    <name evidence="2" type="primary">rpmA</name>
    <name type="ordered locus">LMOf2365_1559</name>
</gene>
<name>RL27_LISMF</name>
<comment type="PTM">
    <text evidence="1">The N-terminus is cleaved by ribosomal processing cysteine protease Prp.</text>
</comment>
<comment type="similarity">
    <text evidence="2">Belongs to the bacterial ribosomal protein bL27 family.</text>
</comment>
<organism>
    <name type="scientific">Listeria monocytogenes serotype 4b (strain F2365)</name>
    <dbReference type="NCBI Taxonomy" id="265669"/>
    <lineage>
        <taxon>Bacteria</taxon>
        <taxon>Bacillati</taxon>
        <taxon>Bacillota</taxon>
        <taxon>Bacilli</taxon>
        <taxon>Bacillales</taxon>
        <taxon>Listeriaceae</taxon>
        <taxon>Listeria</taxon>
    </lineage>
</organism>
<protein>
    <recommendedName>
        <fullName evidence="2">Large ribosomal subunit protein bL27</fullName>
    </recommendedName>
    <alternativeName>
        <fullName evidence="4">50S ribosomal protein L27</fullName>
    </alternativeName>
</protein>
<reference key="1">
    <citation type="journal article" date="2004" name="Nucleic Acids Res.">
        <title>Whole genome comparisons of serotype 4b and 1/2a strains of the food-borne pathogen Listeria monocytogenes reveal new insights into the core genome components of this species.</title>
        <authorList>
            <person name="Nelson K.E."/>
            <person name="Fouts D.E."/>
            <person name="Mongodin E.F."/>
            <person name="Ravel J."/>
            <person name="DeBoy R.T."/>
            <person name="Kolonay J.F."/>
            <person name="Rasko D.A."/>
            <person name="Angiuoli S.V."/>
            <person name="Gill S.R."/>
            <person name="Paulsen I.T."/>
            <person name="Peterson J.D."/>
            <person name="White O."/>
            <person name="Nelson W.C."/>
            <person name="Nierman W.C."/>
            <person name="Beanan M.J."/>
            <person name="Brinkac L.M."/>
            <person name="Daugherty S.C."/>
            <person name="Dodson R.J."/>
            <person name="Durkin A.S."/>
            <person name="Madupu R."/>
            <person name="Haft D.H."/>
            <person name="Selengut J."/>
            <person name="Van Aken S.E."/>
            <person name="Khouri H.M."/>
            <person name="Fedorova N."/>
            <person name="Forberger H.A."/>
            <person name="Tran B."/>
            <person name="Kathariou S."/>
            <person name="Wonderling L.D."/>
            <person name="Uhlich G.A."/>
            <person name="Bayles D.O."/>
            <person name="Luchansky J.B."/>
            <person name="Fraser C.M."/>
        </authorList>
    </citation>
    <scope>NUCLEOTIDE SEQUENCE [LARGE SCALE GENOMIC DNA]</scope>
    <source>
        <strain>F2365</strain>
    </source>
</reference>
<evidence type="ECO:0000250" key="1">
    <source>
        <dbReference type="UniProtKB" id="Q2FXT0"/>
    </source>
</evidence>
<evidence type="ECO:0000255" key="2">
    <source>
        <dbReference type="HAMAP-Rule" id="MF_00539"/>
    </source>
</evidence>
<evidence type="ECO:0000256" key="3">
    <source>
        <dbReference type="SAM" id="MobiDB-lite"/>
    </source>
</evidence>
<evidence type="ECO:0000305" key="4"/>
<proteinExistence type="inferred from homology"/>